<accession>Q1BTG5</accession>
<comment type="function">
    <text evidence="1">This is one of the proteins that binds to the 5S RNA in the ribosome where it forms part of the central protuberance.</text>
</comment>
<comment type="subunit">
    <text evidence="1">Part of the 50S ribosomal subunit; part of the 5S rRNA/L5/L18/L25 subcomplex. Contacts the 5S rRNA. Binds to the 5S rRNA independently of L5 and L18.</text>
</comment>
<comment type="similarity">
    <text evidence="1">Belongs to the bacterial ribosomal protein bL25 family. CTC subfamily.</text>
</comment>
<name>RL25_BURO1</name>
<feature type="chain" id="PRO_1000052870" description="Large ribosomal subunit protein bL25">
    <location>
        <begin position="1"/>
        <end position="201"/>
    </location>
</feature>
<gene>
    <name evidence="1" type="primary">rplY</name>
    <name evidence="1" type="synonym">ctc</name>
    <name type="ordered locus">Bcen_2189</name>
</gene>
<sequence>MKVVAFERQQQGTGASRRLRNAGKTTGIVYGGEAAPQKIELDHNALWHALKKEAFHSSILDLEVAGQSQQVLLRDVQYHPFKQLVLHVDFQRVDAKKKLHTKAPLHFLNAEVSPAVKLSSAIVSHVATEIEIECLPADLPEFLEVDLSKIEAGQSLHAKDIALPKGVALVAHVDAENPVIASATVPAGAVSDAAEGETPAA</sequence>
<evidence type="ECO:0000255" key="1">
    <source>
        <dbReference type="HAMAP-Rule" id="MF_01334"/>
    </source>
</evidence>
<evidence type="ECO:0000305" key="2"/>
<reference key="1">
    <citation type="submission" date="2006-05" db="EMBL/GenBank/DDBJ databases">
        <title>Complete sequence of chromosome 1 of Burkholderia cenocepacia AU 1054.</title>
        <authorList>
            <consortium name="US DOE Joint Genome Institute"/>
            <person name="Copeland A."/>
            <person name="Lucas S."/>
            <person name="Lapidus A."/>
            <person name="Barry K."/>
            <person name="Detter J.C."/>
            <person name="Glavina del Rio T."/>
            <person name="Hammon N."/>
            <person name="Israni S."/>
            <person name="Dalin E."/>
            <person name="Tice H."/>
            <person name="Pitluck S."/>
            <person name="Chain P."/>
            <person name="Malfatti S."/>
            <person name="Shin M."/>
            <person name="Vergez L."/>
            <person name="Schmutz J."/>
            <person name="Larimer F."/>
            <person name="Land M."/>
            <person name="Hauser L."/>
            <person name="Kyrpides N."/>
            <person name="Lykidis A."/>
            <person name="LiPuma J.J."/>
            <person name="Konstantinidis K."/>
            <person name="Tiedje J.M."/>
            <person name="Richardson P."/>
        </authorList>
    </citation>
    <scope>NUCLEOTIDE SEQUENCE [LARGE SCALE GENOMIC DNA]</scope>
    <source>
        <strain>AU 1054</strain>
    </source>
</reference>
<protein>
    <recommendedName>
        <fullName evidence="1">Large ribosomal subunit protein bL25</fullName>
    </recommendedName>
    <alternativeName>
        <fullName evidence="2">50S ribosomal protein L25</fullName>
    </alternativeName>
    <alternativeName>
        <fullName evidence="1">General stress protein CTC</fullName>
    </alternativeName>
</protein>
<dbReference type="EMBL" id="CP000378">
    <property type="protein sequence ID" value="ABF77090.1"/>
    <property type="molecule type" value="Genomic_DNA"/>
</dbReference>
<dbReference type="SMR" id="Q1BTG5"/>
<dbReference type="HOGENOM" id="CLU_075939_0_1_4"/>
<dbReference type="GO" id="GO:0022625">
    <property type="term" value="C:cytosolic large ribosomal subunit"/>
    <property type="evidence" value="ECO:0007669"/>
    <property type="project" value="TreeGrafter"/>
</dbReference>
<dbReference type="GO" id="GO:0008097">
    <property type="term" value="F:5S rRNA binding"/>
    <property type="evidence" value="ECO:0007669"/>
    <property type="project" value="InterPro"/>
</dbReference>
<dbReference type="GO" id="GO:0003735">
    <property type="term" value="F:structural constituent of ribosome"/>
    <property type="evidence" value="ECO:0007669"/>
    <property type="project" value="InterPro"/>
</dbReference>
<dbReference type="GO" id="GO:0006412">
    <property type="term" value="P:translation"/>
    <property type="evidence" value="ECO:0007669"/>
    <property type="project" value="UniProtKB-UniRule"/>
</dbReference>
<dbReference type="CDD" id="cd00495">
    <property type="entry name" value="Ribosomal_L25_TL5_CTC"/>
    <property type="match status" value="1"/>
</dbReference>
<dbReference type="Gene3D" id="2.170.120.20">
    <property type="entry name" value="Ribosomal protein L25, beta domain"/>
    <property type="match status" value="1"/>
</dbReference>
<dbReference type="Gene3D" id="2.40.240.10">
    <property type="entry name" value="Ribosomal Protein L25, Chain P"/>
    <property type="match status" value="1"/>
</dbReference>
<dbReference type="HAMAP" id="MF_01334">
    <property type="entry name" value="Ribosomal_bL25_CTC"/>
    <property type="match status" value="1"/>
</dbReference>
<dbReference type="InterPro" id="IPR020056">
    <property type="entry name" value="Rbsml_bL25/Gln-tRNA_synth_N"/>
</dbReference>
<dbReference type="InterPro" id="IPR011035">
    <property type="entry name" value="Ribosomal_bL25/Gln-tRNA_synth"/>
</dbReference>
<dbReference type="InterPro" id="IPR020057">
    <property type="entry name" value="Ribosomal_bL25_b-dom"/>
</dbReference>
<dbReference type="InterPro" id="IPR037121">
    <property type="entry name" value="Ribosomal_bL25_C"/>
</dbReference>
<dbReference type="InterPro" id="IPR001021">
    <property type="entry name" value="Ribosomal_bL25_long"/>
</dbReference>
<dbReference type="InterPro" id="IPR029751">
    <property type="entry name" value="Ribosomal_L25_dom"/>
</dbReference>
<dbReference type="InterPro" id="IPR020930">
    <property type="entry name" value="Ribosomal_uL5_bac-type"/>
</dbReference>
<dbReference type="NCBIfam" id="TIGR00731">
    <property type="entry name" value="bL25_bact_ctc"/>
    <property type="match status" value="1"/>
</dbReference>
<dbReference type="NCBIfam" id="NF004128">
    <property type="entry name" value="PRK05618.1-2"/>
    <property type="match status" value="1"/>
</dbReference>
<dbReference type="NCBIfam" id="NF004130">
    <property type="entry name" value="PRK05618.1-5"/>
    <property type="match status" value="1"/>
</dbReference>
<dbReference type="NCBIfam" id="NF004612">
    <property type="entry name" value="PRK05943.1"/>
    <property type="match status" value="1"/>
</dbReference>
<dbReference type="PANTHER" id="PTHR33284">
    <property type="entry name" value="RIBOSOMAL PROTEIN L25/GLN-TRNA SYNTHETASE, ANTI-CODON-BINDING DOMAIN-CONTAINING PROTEIN"/>
    <property type="match status" value="1"/>
</dbReference>
<dbReference type="PANTHER" id="PTHR33284:SF1">
    <property type="entry name" value="RIBOSOMAL PROTEIN L25_GLN-TRNA SYNTHETASE, ANTI-CODON-BINDING DOMAIN-CONTAINING PROTEIN"/>
    <property type="match status" value="1"/>
</dbReference>
<dbReference type="Pfam" id="PF01386">
    <property type="entry name" value="Ribosomal_L25p"/>
    <property type="match status" value="1"/>
</dbReference>
<dbReference type="Pfam" id="PF14693">
    <property type="entry name" value="Ribosomal_TL5_C"/>
    <property type="match status" value="1"/>
</dbReference>
<dbReference type="SUPFAM" id="SSF50715">
    <property type="entry name" value="Ribosomal protein L25-like"/>
    <property type="match status" value="1"/>
</dbReference>
<organism>
    <name type="scientific">Burkholderia orbicola (strain AU 1054)</name>
    <dbReference type="NCBI Taxonomy" id="331271"/>
    <lineage>
        <taxon>Bacteria</taxon>
        <taxon>Pseudomonadati</taxon>
        <taxon>Pseudomonadota</taxon>
        <taxon>Betaproteobacteria</taxon>
        <taxon>Burkholderiales</taxon>
        <taxon>Burkholderiaceae</taxon>
        <taxon>Burkholderia</taxon>
        <taxon>Burkholderia cepacia complex</taxon>
        <taxon>Burkholderia orbicola</taxon>
    </lineage>
</organism>
<keyword id="KW-0687">Ribonucleoprotein</keyword>
<keyword id="KW-0689">Ribosomal protein</keyword>
<keyword id="KW-0694">RNA-binding</keyword>
<keyword id="KW-0699">rRNA-binding</keyword>
<proteinExistence type="inferred from homology"/>